<dbReference type="EC" id="2.1.1.220"/>
<dbReference type="EMBL" id="AP008226">
    <property type="protein sequence ID" value="BAD70432.1"/>
    <property type="molecule type" value="Genomic_DNA"/>
</dbReference>
<dbReference type="RefSeq" id="WP_011228067.1">
    <property type="nucleotide sequence ID" value="NC_006461.1"/>
</dbReference>
<dbReference type="RefSeq" id="YP_143875.1">
    <property type="nucleotide sequence ID" value="NC_006461.1"/>
</dbReference>
<dbReference type="SMR" id="Q5SKN4"/>
<dbReference type="EnsemblBacteria" id="BAD70432">
    <property type="protein sequence ID" value="BAD70432"/>
    <property type="gene ID" value="BAD70432"/>
</dbReference>
<dbReference type="GeneID" id="3169400"/>
<dbReference type="KEGG" id="ttj:TTHA0609"/>
<dbReference type="PATRIC" id="fig|300852.9.peg.607"/>
<dbReference type="eggNOG" id="COG2519">
    <property type="taxonomic scope" value="Bacteria"/>
</dbReference>
<dbReference type="HOGENOM" id="CLU_025402_0_1_0"/>
<dbReference type="PhylomeDB" id="Q5SKN4"/>
<dbReference type="Proteomes" id="UP000000532">
    <property type="component" value="Chromosome"/>
</dbReference>
<dbReference type="GO" id="GO:0031515">
    <property type="term" value="C:tRNA (m1A) methyltransferase complex"/>
    <property type="evidence" value="ECO:0007669"/>
    <property type="project" value="InterPro"/>
</dbReference>
<dbReference type="GO" id="GO:0160107">
    <property type="term" value="F:tRNA (adenine(58)-N1)-methyltransferase activity"/>
    <property type="evidence" value="ECO:0007669"/>
    <property type="project" value="UniProtKB-EC"/>
</dbReference>
<dbReference type="GO" id="GO:0030488">
    <property type="term" value="P:tRNA methylation"/>
    <property type="evidence" value="ECO:0007669"/>
    <property type="project" value="InterPro"/>
</dbReference>
<dbReference type="CDD" id="cd02440">
    <property type="entry name" value="AdoMet_MTases"/>
    <property type="match status" value="1"/>
</dbReference>
<dbReference type="Gene3D" id="3.40.50.150">
    <property type="entry name" value="Vaccinia Virus protein VP39"/>
    <property type="match status" value="1"/>
</dbReference>
<dbReference type="InterPro" id="IPR029063">
    <property type="entry name" value="SAM-dependent_MTases_sf"/>
</dbReference>
<dbReference type="InterPro" id="IPR049470">
    <property type="entry name" value="TRM61_C"/>
</dbReference>
<dbReference type="InterPro" id="IPR014816">
    <property type="entry name" value="tRNA_MeTrfase_Gcd14"/>
</dbReference>
<dbReference type="PANTHER" id="PTHR12133">
    <property type="entry name" value="TRNA (ADENINE(58)-N(1))-METHYLTRANSFERASE"/>
    <property type="match status" value="1"/>
</dbReference>
<dbReference type="PANTHER" id="PTHR12133:SF1">
    <property type="entry name" value="TRNA (ADENINE(58)-N(1))-METHYLTRANSFERASE, MITOCHONDRIAL"/>
    <property type="match status" value="1"/>
</dbReference>
<dbReference type="Pfam" id="PF08704">
    <property type="entry name" value="GCD14"/>
    <property type="match status" value="1"/>
</dbReference>
<dbReference type="Pfam" id="PF14801">
    <property type="entry name" value="TrmI-like_N"/>
    <property type="match status" value="1"/>
</dbReference>
<dbReference type="PIRSF" id="PIRSF017269">
    <property type="entry name" value="GCD14"/>
    <property type="match status" value="1"/>
</dbReference>
<dbReference type="SUPFAM" id="SSF53335">
    <property type="entry name" value="S-adenosyl-L-methionine-dependent methyltransferases"/>
    <property type="match status" value="1"/>
</dbReference>
<dbReference type="PROSITE" id="PS51620">
    <property type="entry name" value="SAM_TRM61"/>
    <property type="match status" value="1"/>
</dbReference>
<evidence type="ECO:0000250" key="1">
    <source>
        <dbReference type="UniProtKB" id="Q8GBB2"/>
    </source>
</evidence>
<evidence type="ECO:0000255" key="2">
    <source>
        <dbReference type="PROSITE-ProRule" id="PRU00952"/>
    </source>
</evidence>
<gene>
    <name type="primary">trmI</name>
    <name type="ordered locus">TTHA0609</name>
</gene>
<comment type="function">
    <text evidence="1">Catalyzes the S-adenosyl-L-methionine-dependent formation of N(1)-methyladenine at position 58 (m1A58) in tRNA.</text>
</comment>
<comment type="catalytic activity">
    <reaction evidence="2">
        <text>adenosine(58) in tRNA + S-adenosyl-L-methionine = N(1)-methyladenosine(58) in tRNA + S-adenosyl-L-homocysteine + H(+)</text>
        <dbReference type="Rhea" id="RHEA:43152"/>
        <dbReference type="Rhea" id="RHEA-COMP:10365"/>
        <dbReference type="Rhea" id="RHEA-COMP:10366"/>
        <dbReference type="ChEBI" id="CHEBI:15378"/>
        <dbReference type="ChEBI" id="CHEBI:57856"/>
        <dbReference type="ChEBI" id="CHEBI:59789"/>
        <dbReference type="ChEBI" id="CHEBI:74411"/>
        <dbReference type="ChEBI" id="CHEBI:74491"/>
        <dbReference type="EC" id="2.1.1.220"/>
    </reaction>
</comment>
<comment type="subunit">
    <text evidence="1">Homotetramer composed of a dimer of dimers.</text>
</comment>
<comment type="domain">
    <text evidence="1">Contains a large catalytic C-terminal domain that binds S-adenosyl-L-methionine and a smaller N-terminal domain that may play a role in tRNA recognition. Domains are connected by a linker region.</text>
</comment>
<comment type="similarity">
    <text evidence="2">Belongs to the class I-like SAM-binding methyltransferase superfamily. TRM61 family.</text>
</comment>
<keyword id="KW-0489">Methyltransferase</keyword>
<keyword id="KW-1185">Reference proteome</keyword>
<keyword id="KW-0949">S-adenosyl-L-methionine</keyword>
<keyword id="KW-0808">Transferase</keyword>
<keyword id="KW-0819">tRNA processing</keyword>
<organism>
    <name type="scientific">Thermus thermophilus (strain ATCC 27634 / DSM 579 / HB8)</name>
    <dbReference type="NCBI Taxonomy" id="300852"/>
    <lineage>
        <taxon>Bacteria</taxon>
        <taxon>Thermotogati</taxon>
        <taxon>Deinococcota</taxon>
        <taxon>Deinococci</taxon>
        <taxon>Thermales</taxon>
        <taxon>Thermaceae</taxon>
        <taxon>Thermus</taxon>
    </lineage>
</organism>
<feature type="chain" id="PRO_0000311813" description="tRNA (adenine(58)-N(1))-methyltransferase TrmI">
    <location>
        <begin position="1"/>
        <end position="255"/>
    </location>
</feature>
<feature type="binding site" evidence="1">
    <location>
        <begin position="104"/>
        <end position="107"/>
    </location>
    <ligand>
        <name>S-adenosyl-L-methionine</name>
        <dbReference type="ChEBI" id="CHEBI:59789"/>
    </ligand>
</feature>
<feature type="binding site" evidence="2">
    <location>
        <position position="125"/>
    </location>
    <ligand>
        <name>S-adenosyl-L-methionine</name>
        <dbReference type="ChEBI" id="CHEBI:59789"/>
    </ligand>
</feature>
<feature type="binding site" evidence="2">
    <location>
        <position position="130"/>
    </location>
    <ligand>
        <name>S-adenosyl-L-methionine</name>
        <dbReference type="ChEBI" id="CHEBI:59789"/>
    </ligand>
</feature>
<feature type="binding site" evidence="2">
    <location>
        <position position="155"/>
    </location>
    <ligand>
        <name>S-adenosyl-L-methionine</name>
        <dbReference type="ChEBI" id="CHEBI:59789"/>
    </ligand>
</feature>
<feature type="binding site" evidence="2">
    <location>
        <position position="170"/>
    </location>
    <ligand>
        <name>S-adenosyl-L-methionine</name>
        <dbReference type="ChEBI" id="CHEBI:59789"/>
    </ligand>
</feature>
<accession>Q5SKN4</accession>
<reference key="1">
    <citation type="submission" date="2004-11" db="EMBL/GenBank/DDBJ databases">
        <title>Complete genome sequence of Thermus thermophilus HB8.</title>
        <authorList>
            <person name="Masui R."/>
            <person name="Kurokawa K."/>
            <person name="Nakagawa N."/>
            <person name="Tokunaga F."/>
            <person name="Koyama Y."/>
            <person name="Shibata T."/>
            <person name="Oshima T."/>
            <person name="Yokoyama S."/>
            <person name="Yasunaga T."/>
            <person name="Kuramitsu S."/>
        </authorList>
    </citation>
    <scope>NUCLEOTIDE SEQUENCE [LARGE SCALE GENOMIC DNA]</scope>
    <source>
        <strain>ATCC 27634 / DSM 579 / HB8</strain>
    </source>
</reference>
<proteinExistence type="inferred from homology"/>
<name>TRMI_THET8</name>
<sequence length="255" mass="28568">MAWPGPLLLKDRKGRAYLVFPKEGGVFHHHKGSVPHEALLEAGPGGVVRTHLGEELSVHRPTLEEYLLHMKRSATPTYPKDASAMVTLLDLAPGMRVLEAGTGSGGLTLFLARAVGEKGLVESYEARPHHLAQAERNVRAFWQVENVRFHLGKLEEAELEEAAYDGVALDLMEPWKALEKAALALKPDRFLVAYLPNITQVLELVRAAEAHPFRLERVLEVGWREWEVRLPVAHPRFQQVGHTAFLVALRRWKAS</sequence>
<protein>
    <recommendedName>
        <fullName>tRNA (adenine(58)-N(1))-methyltransferase TrmI</fullName>
        <ecNumber>2.1.1.220</ecNumber>
    </recommendedName>
    <alternativeName>
        <fullName>tRNA(m1A58)-methyltransferase</fullName>
        <shortName>tRNA(m1A58)MTase</shortName>
    </alternativeName>
</protein>